<reference key="1">
    <citation type="journal article" date="2005" name="PLoS Biol.">
        <title>Major structural differences and novel potential virulence mechanisms from the genomes of multiple Campylobacter species.</title>
        <authorList>
            <person name="Fouts D.E."/>
            <person name="Mongodin E.F."/>
            <person name="Mandrell R.E."/>
            <person name="Miller W.G."/>
            <person name="Rasko D.A."/>
            <person name="Ravel J."/>
            <person name="Brinkac L.M."/>
            <person name="DeBoy R.T."/>
            <person name="Parker C.T."/>
            <person name="Daugherty S.C."/>
            <person name="Dodson R.J."/>
            <person name="Durkin A.S."/>
            <person name="Madupu R."/>
            <person name="Sullivan S.A."/>
            <person name="Shetty J.U."/>
            <person name="Ayodeji M.A."/>
            <person name="Shvartsbeyn A."/>
            <person name="Schatz M.C."/>
            <person name="Badger J.H."/>
            <person name="Fraser C.M."/>
            <person name="Nelson K.E."/>
        </authorList>
    </citation>
    <scope>NUCLEOTIDE SEQUENCE [LARGE SCALE GENOMIC DNA]</scope>
    <source>
        <strain>RM1221</strain>
    </source>
</reference>
<gene>
    <name evidence="1" type="primary">nadD</name>
    <name type="ordered locus">CJE1591</name>
</gene>
<comment type="function">
    <text evidence="1">Catalyzes the reversible adenylation of nicotinate mononucleotide (NaMN) to nicotinic acid adenine dinucleotide (NaAD).</text>
</comment>
<comment type="catalytic activity">
    <reaction evidence="1">
        <text>nicotinate beta-D-ribonucleotide + ATP + H(+) = deamido-NAD(+) + diphosphate</text>
        <dbReference type="Rhea" id="RHEA:22860"/>
        <dbReference type="ChEBI" id="CHEBI:15378"/>
        <dbReference type="ChEBI" id="CHEBI:30616"/>
        <dbReference type="ChEBI" id="CHEBI:33019"/>
        <dbReference type="ChEBI" id="CHEBI:57502"/>
        <dbReference type="ChEBI" id="CHEBI:58437"/>
        <dbReference type="EC" id="2.7.7.18"/>
    </reaction>
</comment>
<comment type="pathway">
    <text evidence="1">Cofactor biosynthesis; NAD(+) biosynthesis; deamido-NAD(+) from nicotinate D-ribonucleotide: step 1/1.</text>
</comment>
<comment type="similarity">
    <text evidence="1">Belongs to the NadD family.</text>
</comment>
<keyword id="KW-0067">ATP-binding</keyword>
<keyword id="KW-0520">NAD</keyword>
<keyword id="KW-0547">Nucleotide-binding</keyword>
<keyword id="KW-0548">Nucleotidyltransferase</keyword>
<keyword id="KW-0662">Pyridine nucleotide biosynthesis</keyword>
<keyword id="KW-0808">Transferase</keyword>
<feature type="chain" id="PRO_0000181401" description="Probable nicotinate-nucleotide adenylyltransferase">
    <location>
        <begin position="1"/>
        <end position="181"/>
    </location>
</feature>
<dbReference type="EC" id="2.7.7.18" evidence="1"/>
<dbReference type="EMBL" id="CP000025">
    <property type="protein sequence ID" value="AAW36024.1"/>
    <property type="molecule type" value="Genomic_DNA"/>
</dbReference>
<dbReference type="RefSeq" id="WP_002780449.1">
    <property type="nucleotide sequence ID" value="NC_003912.7"/>
</dbReference>
<dbReference type="SMR" id="Q5HT13"/>
<dbReference type="KEGG" id="cjr:CJE1591"/>
<dbReference type="HOGENOM" id="CLU_069765_3_2_7"/>
<dbReference type="UniPathway" id="UPA00253">
    <property type="reaction ID" value="UER00332"/>
</dbReference>
<dbReference type="GO" id="GO:0005524">
    <property type="term" value="F:ATP binding"/>
    <property type="evidence" value="ECO:0007669"/>
    <property type="project" value="UniProtKB-KW"/>
</dbReference>
<dbReference type="GO" id="GO:0004515">
    <property type="term" value="F:nicotinate-nucleotide adenylyltransferase activity"/>
    <property type="evidence" value="ECO:0007669"/>
    <property type="project" value="UniProtKB-UniRule"/>
</dbReference>
<dbReference type="GO" id="GO:0009435">
    <property type="term" value="P:NAD biosynthetic process"/>
    <property type="evidence" value="ECO:0007669"/>
    <property type="project" value="UniProtKB-UniRule"/>
</dbReference>
<dbReference type="CDD" id="cd02165">
    <property type="entry name" value="NMNAT"/>
    <property type="match status" value="1"/>
</dbReference>
<dbReference type="Gene3D" id="3.40.50.620">
    <property type="entry name" value="HUPs"/>
    <property type="match status" value="1"/>
</dbReference>
<dbReference type="HAMAP" id="MF_00244">
    <property type="entry name" value="NaMN_adenylyltr"/>
    <property type="match status" value="1"/>
</dbReference>
<dbReference type="InterPro" id="IPR004821">
    <property type="entry name" value="Cyt_trans-like"/>
</dbReference>
<dbReference type="InterPro" id="IPR005248">
    <property type="entry name" value="NadD/NMNAT"/>
</dbReference>
<dbReference type="InterPro" id="IPR014729">
    <property type="entry name" value="Rossmann-like_a/b/a_fold"/>
</dbReference>
<dbReference type="NCBIfam" id="TIGR00125">
    <property type="entry name" value="cyt_tran_rel"/>
    <property type="match status" value="1"/>
</dbReference>
<dbReference type="NCBIfam" id="TIGR00482">
    <property type="entry name" value="nicotinate (nicotinamide) nucleotide adenylyltransferase"/>
    <property type="match status" value="1"/>
</dbReference>
<dbReference type="PANTHER" id="PTHR39321">
    <property type="entry name" value="NICOTINATE-NUCLEOTIDE ADENYLYLTRANSFERASE-RELATED"/>
    <property type="match status" value="1"/>
</dbReference>
<dbReference type="PANTHER" id="PTHR39321:SF3">
    <property type="entry name" value="PHOSPHOPANTETHEINE ADENYLYLTRANSFERASE"/>
    <property type="match status" value="1"/>
</dbReference>
<dbReference type="Pfam" id="PF01467">
    <property type="entry name" value="CTP_transf_like"/>
    <property type="match status" value="1"/>
</dbReference>
<dbReference type="SUPFAM" id="SSF52374">
    <property type="entry name" value="Nucleotidylyl transferase"/>
    <property type="match status" value="1"/>
</dbReference>
<organism>
    <name type="scientific">Campylobacter jejuni (strain RM1221)</name>
    <dbReference type="NCBI Taxonomy" id="195099"/>
    <lineage>
        <taxon>Bacteria</taxon>
        <taxon>Pseudomonadati</taxon>
        <taxon>Campylobacterota</taxon>
        <taxon>Epsilonproteobacteria</taxon>
        <taxon>Campylobacterales</taxon>
        <taxon>Campylobacteraceae</taxon>
        <taxon>Campylobacter</taxon>
    </lineage>
</organism>
<name>NADD_CAMJR</name>
<protein>
    <recommendedName>
        <fullName evidence="1">Probable nicotinate-nucleotide adenylyltransferase</fullName>
        <ecNumber evidence="1">2.7.7.18</ecNumber>
    </recommendedName>
    <alternativeName>
        <fullName evidence="1">Deamido-NAD(+) diphosphorylase</fullName>
    </alternativeName>
    <alternativeName>
        <fullName evidence="1">Deamido-NAD(+) pyrophosphorylase</fullName>
    </alternativeName>
    <alternativeName>
        <fullName evidence="1">Nicotinate mononucleotide adenylyltransferase</fullName>
        <shortName evidence="1">NaMN adenylyltransferase</shortName>
    </alternativeName>
</protein>
<evidence type="ECO:0000255" key="1">
    <source>
        <dbReference type="HAMAP-Rule" id="MF_00244"/>
    </source>
</evidence>
<sequence length="181" mass="21312">MKIALFGGSFDPPHNGHNSVVLEALEKLDIDKLIIMPTYINPFKQSFSADEKQRFLWVKKLWGHLPKVEICDFEIRQKRPVPSIESVKYLYKLYNPSKFYLLIGADHLEKLHLWHDFEKLNSLVEFVIANRNDIGIPKNFKDLKTNKKIASSFIRDTLNTNEVCEEIKDEVKKYYEKLQKN</sequence>
<proteinExistence type="inferred from homology"/>
<accession>Q5HT13</accession>